<organism>
    <name type="scientific">Methylobacterium sp. (strain 4-46)</name>
    <dbReference type="NCBI Taxonomy" id="426117"/>
    <lineage>
        <taxon>Bacteria</taxon>
        <taxon>Pseudomonadati</taxon>
        <taxon>Pseudomonadota</taxon>
        <taxon>Alphaproteobacteria</taxon>
        <taxon>Hyphomicrobiales</taxon>
        <taxon>Methylobacteriaceae</taxon>
        <taxon>Methylobacterium</taxon>
    </lineage>
</organism>
<evidence type="ECO:0000255" key="1">
    <source>
        <dbReference type="HAMAP-Rule" id="MF_00454"/>
    </source>
</evidence>
<gene>
    <name evidence="1" type="primary">fluC</name>
    <name evidence="1" type="synonym">crcB</name>
    <name type="ordered locus">M446_1675</name>
</gene>
<keyword id="KW-0997">Cell inner membrane</keyword>
<keyword id="KW-1003">Cell membrane</keyword>
<keyword id="KW-0407">Ion channel</keyword>
<keyword id="KW-0406">Ion transport</keyword>
<keyword id="KW-0472">Membrane</keyword>
<keyword id="KW-0479">Metal-binding</keyword>
<keyword id="KW-0915">Sodium</keyword>
<keyword id="KW-0812">Transmembrane</keyword>
<keyword id="KW-1133">Transmembrane helix</keyword>
<keyword id="KW-0813">Transport</keyword>
<reference key="1">
    <citation type="submission" date="2008-02" db="EMBL/GenBank/DDBJ databases">
        <title>Complete sequence of chromosome of Methylobacterium sp. 4-46.</title>
        <authorList>
            <consortium name="US DOE Joint Genome Institute"/>
            <person name="Copeland A."/>
            <person name="Lucas S."/>
            <person name="Lapidus A."/>
            <person name="Glavina del Rio T."/>
            <person name="Dalin E."/>
            <person name="Tice H."/>
            <person name="Bruce D."/>
            <person name="Goodwin L."/>
            <person name="Pitluck S."/>
            <person name="Chertkov O."/>
            <person name="Brettin T."/>
            <person name="Detter J.C."/>
            <person name="Han C."/>
            <person name="Kuske C.R."/>
            <person name="Schmutz J."/>
            <person name="Larimer F."/>
            <person name="Land M."/>
            <person name="Hauser L."/>
            <person name="Kyrpides N."/>
            <person name="Ivanova N."/>
            <person name="Marx C.J."/>
            <person name="Richardson P."/>
        </authorList>
    </citation>
    <scope>NUCLEOTIDE SEQUENCE [LARGE SCALE GENOMIC DNA]</scope>
    <source>
        <strain>4-46</strain>
    </source>
</reference>
<name>FLUC_METS4</name>
<proteinExistence type="inferred from homology"/>
<sequence>MLNTLVVFLGAGLGGALRYGVNVSAARLGGSFPAATMIINVSGSLAMGILAGWFVVRAGLPQSLRLFLTTGILGGFTTFSTFSLEAFLLIERGALAQAVLYVIGSVAAGIAGVAVSFAIIRHFG</sequence>
<accession>B0UQ37</accession>
<dbReference type="EMBL" id="CP000943">
    <property type="protein sequence ID" value="ACA16168.1"/>
    <property type="molecule type" value="Genomic_DNA"/>
</dbReference>
<dbReference type="RefSeq" id="WP_012331579.1">
    <property type="nucleotide sequence ID" value="NC_010511.1"/>
</dbReference>
<dbReference type="SMR" id="B0UQ37"/>
<dbReference type="STRING" id="426117.M446_1675"/>
<dbReference type="KEGG" id="met:M446_1675"/>
<dbReference type="eggNOG" id="COG0239">
    <property type="taxonomic scope" value="Bacteria"/>
</dbReference>
<dbReference type="HOGENOM" id="CLU_114342_3_0_5"/>
<dbReference type="GO" id="GO:0005886">
    <property type="term" value="C:plasma membrane"/>
    <property type="evidence" value="ECO:0007669"/>
    <property type="project" value="UniProtKB-SubCell"/>
</dbReference>
<dbReference type="GO" id="GO:0062054">
    <property type="term" value="F:fluoride channel activity"/>
    <property type="evidence" value="ECO:0007669"/>
    <property type="project" value="UniProtKB-UniRule"/>
</dbReference>
<dbReference type="GO" id="GO:0046872">
    <property type="term" value="F:metal ion binding"/>
    <property type="evidence" value="ECO:0007669"/>
    <property type="project" value="UniProtKB-KW"/>
</dbReference>
<dbReference type="GO" id="GO:0140114">
    <property type="term" value="P:cellular detoxification of fluoride"/>
    <property type="evidence" value="ECO:0007669"/>
    <property type="project" value="UniProtKB-UniRule"/>
</dbReference>
<dbReference type="HAMAP" id="MF_00454">
    <property type="entry name" value="FluC"/>
    <property type="match status" value="1"/>
</dbReference>
<dbReference type="InterPro" id="IPR003691">
    <property type="entry name" value="FluC"/>
</dbReference>
<dbReference type="NCBIfam" id="TIGR00494">
    <property type="entry name" value="crcB"/>
    <property type="match status" value="1"/>
</dbReference>
<dbReference type="NCBIfam" id="NF010794">
    <property type="entry name" value="PRK14198.1"/>
    <property type="match status" value="1"/>
</dbReference>
<dbReference type="PANTHER" id="PTHR28259">
    <property type="entry name" value="FLUORIDE EXPORT PROTEIN 1-RELATED"/>
    <property type="match status" value="1"/>
</dbReference>
<dbReference type="PANTHER" id="PTHR28259:SF1">
    <property type="entry name" value="FLUORIDE EXPORT PROTEIN 1-RELATED"/>
    <property type="match status" value="1"/>
</dbReference>
<dbReference type="Pfam" id="PF02537">
    <property type="entry name" value="CRCB"/>
    <property type="match status" value="1"/>
</dbReference>
<feature type="chain" id="PRO_1000125140" description="Fluoride-specific ion channel FluC">
    <location>
        <begin position="1"/>
        <end position="124"/>
    </location>
</feature>
<feature type="transmembrane region" description="Helical" evidence="1">
    <location>
        <begin position="1"/>
        <end position="21"/>
    </location>
</feature>
<feature type="transmembrane region" description="Helical" evidence="1">
    <location>
        <begin position="36"/>
        <end position="56"/>
    </location>
</feature>
<feature type="transmembrane region" description="Helical" evidence="1">
    <location>
        <begin position="70"/>
        <end position="90"/>
    </location>
</feature>
<feature type="transmembrane region" description="Helical" evidence="1">
    <location>
        <begin position="100"/>
        <end position="120"/>
    </location>
</feature>
<feature type="binding site" evidence="1">
    <location>
        <position position="74"/>
    </location>
    <ligand>
        <name>Na(+)</name>
        <dbReference type="ChEBI" id="CHEBI:29101"/>
        <note>structural</note>
    </ligand>
</feature>
<feature type="binding site" evidence="1">
    <location>
        <position position="77"/>
    </location>
    <ligand>
        <name>Na(+)</name>
        <dbReference type="ChEBI" id="CHEBI:29101"/>
        <note>structural</note>
    </ligand>
</feature>
<protein>
    <recommendedName>
        <fullName evidence="1">Fluoride-specific ion channel FluC</fullName>
    </recommendedName>
</protein>
<comment type="function">
    <text evidence="1">Fluoride-specific ion channel. Important for reducing fluoride concentration in the cell, thus reducing its toxicity.</text>
</comment>
<comment type="catalytic activity">
    <reaction evidence="1">
        <text>fluoride(in) = fluoride(out)</text>
        <dbReference type="Rhea" id="RHEA:76159"/>
        <dbReference type="ChEBI" id="CHEBI:17051"/>
    </reaction>
    <physiologicalReaction direction="left-to-right" evidence="1">
        <dbReference type="Rhea" id="RHEA:76160"/>
    </physiologicalReaction>
</comment>
<comment type="activity regulation">
    <text evidence="1">Na(+) is not transported, but it plays an essential structural role and its presence is essential for fluoride channel function.</text>
</comment>
<comment type="subcellular location">
    <subcellularLocation>
        <location evidence="1">Cell inner membrane</location>
        <topology evidence="1">Multi-pass membrane protein</topology>
    </subcellularLocation>
</comment>
<comment type="similarity">
    <text evidence="1">Belongs to the fluoride channel Fluc/FEX (TC 1.A.43) family.</text>
</comment>